<gene>
    <name evidence="1" type="primary">rplF</name>
    <name type="ordered locus">PputGB1_0499</name>
</gene>
<feature type="chain" id="PRO_1000087056" description="Large ribosomal subunit protein uL6">
    <location>
        <begin position="1"/>
        <end position="177"/>
    </location>
</feature>
<evidence type="ECO:0000255" key="1">
    <source>
        <dbReference type="HAMAP-Rule" id="MF_01365"/>
    </source>
</evidence>
<evidence type="ECO:0000305" key="2"/>
<protein>
    <recommendedName>
        <fullName evidence="1">Large ribosomal subunit protein uL6</fullName>
    </recommendedName>
    <alternativeName>
        <fullName evidence="2">50S ribosomal protein L6</fullName>
    </alternativeName>
</protein>
<name>RL6_PSEPG</name>
<organism>
    <name type="scientific">Pseudomonas putida (strain GB-1)</name>
    <dbReference type="NCBI Taxonomy" id="76869"/>
    <lineage>
        <taxon>Bacteria</taxon>
        <taxon>Pseudomonadati</taxon>
        <taxon>Pseudomonadota</taxon>
        <taxon>Gammaproteobacteria</taxon>
        <taxon>Pseudomonadales</taxon>
        <taxon>Pseudomonadaceae</taxon>
        <taxon>Pseudomonas</taxon>
    </lineage>
</organism>
<sequence>MSRVAKNPVKLPSGVEVKFAGQQLSVKGAKGTLELNVHSSVEVTEESGELRFVARNGDQQARAMAGTTRALVNNMVQGVSQGFERKLQLVGVGYKAQAKGTVLNLALGFSHPVDYELPAGITAETPSQTDILIKGIDKQLVGQVAAEIRDFRPPEPYKGKGVRYADEVVRRKEAKKK</sequence>
<keyword id="KW-0687">Ribonucleoprotein</keyword>
<keyword id="KW-0689">Ribosomal protein</keyword>
<keyword id="KW-0694">RNA-binding</keyword>
<keyword id="KW-0699">rRNA-binding</keyword>
<dbReference type="EMBL" id="CP000926">
    <property type="protein sequence ID" value="ABY96410.1"/>
    <property type="molecule type" value="Genomic_DNA"/>
</dbReference>
<dbReference type="RefSeq" id="WP_003255469.1">
    <property type="nucleotide sequence ID" value="NC_010322.1"/>
</dbReference>
<dbReference type="SMR" id="B0KK82"/>
<dbReference type="GeneID" id="88818687"/>
<dbReference type="KEGG" id="ppg:PputGB1_0499"/>
<dbReference type="eggNOG" id="COG0097">
    <property type="taxonomic scope" value="Bacteria"/>
</dbReference>
<dbReference type="HOGENOM" id="CLU_065464_1_2_6"/>
<dbReference type="Proteomes" id="UP000002157">
    <property type="component" value="Chromosome"/>
</dbReference>
<dbReference type="GO" id="GO:0022625">
    <property type="term" value="C:cytosolic large ribosomal subunit"/>
    <property type="evidence" value="ECO:0007669"/>
    <property type="project" value="TreeGrafter"/>
</dbReference>
<dbReference type="GO" id="GO:0019843">
    <property type="term" value="F:rRNA binding"/>
    <property type="evidence" value="ECO:0007669"/>
    <property type="project" value="UniProtKB-UniRule"/>
</dbReference>
<dbReference type="GO" id="GO:0003735">
    <property type="term" value="F:structural constituent of ribosome"/>
    <property type="evidence" value="ECO:0007669"/>
    <property type="project" value="InterPro"/>
</dbReference>
<dbReference type="GO" id="GO:0002181">
    <property type="term" value="P:cytoplasmic translation"/>
    <property type="evidence" value="ECO:0007669"/>
    <property type="project" value="TreeGrafter"/>
</dbReference>
<dbReference type="FunFam" id="3.90.930.12:FF:000001">
    <property type="entry name" value="50S ribosomal protein L6"/>
    <property type="match status" value="1"/>
</dbReference>
<dbReference type="FunFam" id="3.90.930.12:FF:000002">
    <property type="entry name" value="50S ribosomal protein L6"/>
    <property type="match status" value="1"/>
</dbReference>
<dbReference type="Gene3D" id="3.90.930.12">
    <property type="entry name" value="Ribosomal protein L6, alpha-beta domain"/>
    <property type="match status" value="2"/>
</dbReference>
<dbReference type="HAMAP" id="MF_01365_B">
    <property type="entry name" value="Ribosomal_uL6_B"/>
    <property type="match status" value="1"/>
</dbReference>
<dbReference type="InterPro" id="IPR000702">
    <property type="entry name" value="Ribosomal_uL6-like"/>
</dbReference>
<dbReference type="InterPro" id="IPR036789">
    <property type="entry name" value="Ribosomal_uL6-like_a/b-dom_sf"/>
</dbReference>
<dbReference type="InterPro" id="IPR020040">
    <property type="entry name" value="Ribosomal_uL6_a/b-dom"/>
</dbReference>
<dbReference type="InterPro" id="IPR019906">
    <property type="entry name" value="Ribosomal_uL6_bac-type"/>
</dbReference>
<dbReference type="InterPro" id="IPR002358">
    <property type="entry name" value="Ribosomal_uL6_CS"/>
</dbReference>
<dbReference type="NCBIfam" id="TIGR03654">
    <property type="entry name" value="L6_bact"/>
    <property type="match status" value="1"/>
</dbReference>
<dbReference type="PANTHER" id="PTHR11655">
    <property type="entry name" value="60S/50S RIBOSOMAL PROTEIN L6/L9"/>
    <property type="match status" value="1"/>
</dbReference>
<dbReference type="PANTHER" id="PTHR11655:SF14">
    <property type="entry name" value="LARGE RIBOSOMAL SUBUNIT PROTEIN UL6M"/>
    <property type="match status" value="1"/>
</dbReference>
<dbReference type="Pfam" id="PF00347">
    <property type="entry name" value="Ribosomal_L6"/>
    <property type="match status" value="2"/>
</dbReference>
<dbReference type="PIRSF" id="PIRSF002162">
    <property type="entry name" value="Ribosomal_L6"/>
    <property type="match status" value="1"/>
</dbReference>
<dbReference type="PRINTS" id="PR00059">
    <property type="entry name" value="RIBOSOMALL6"/>
</dbReference>
<dbReference type="SUPFAM" id="SSF56053">
    <property type="entry name" value="Ribosomal protein L6"/>
    <property type="match status" value="2"/>
</dbReference>
<dbReference type="PROSITE" id="PS00525">
    <property type="entry name" value="RIBOSOMAL_L6_1"/>
    <property type="match status" value="1"/>
</dbReference>
<proteinExistence type="inferred from homology"/>
<accession>B0KK82</accession>
<reference key="1">
    <citation type="submission" date="2008-01" db="EMBL/GenBank/DDBJ databases">
        <title>Complete sequence of Pseudomonas putida GB-1.</title>
        <authorList>
            <consortium name="US DOE Joint Genome Institute"/>
            <person name="Copeland A."/>
            <person name="Lucas S."/>
            <person name="Lapidus A."/>
            <person name="Barry K."/>
            <person name="Glavina del Rio T."/>
            <person name="Dalin E."/>
            <person name="Tice H."/>
            <person name="Pitluck S."/>
            <person name="Bruce D."/>
            <person name="Goodwin L."/>
            <person name="Chertkov O."/>
            <person name="Brettin T."/>
            <person name="Detter J.C."/>
            <person name="Han C."/>
            <person name="Kuske C.R."/>
            <person name="Schmutz J."/>
            <person name="Larimer F."/>
            <person name="Land M."/>
            <person name="Hauser L."/>
            <person name="Kyrpides N."/>
            <person name="Kim E."/>
            <person name="McCarthy J.K."/>
            <person name="Richardson P."/>
        </authorList>
    </citation>
    <scope>NUCLEOTIDE SEQUENCE [LARGE SCALE GENOMIC DNA]</scope>
    <source>
        <strain>GB-1</strain>
    </source>
</reference>
<comment type="function">
    <text evidence="1">This protein binds to the 23S rRNA, and is important in its secondary structure. It is located near the subunit interface in the base of the L7/L12 stalk, and near the tRNA binding site of the peptidyltransferase center.</text>
</comment>
<comment type="subunit">
    <text evidence="1">Part of the 50S ribosomal subunit.</text>
</comment>
<comment type="similarity">
    <text evidence="1">Belongs to the universal ribosomal protein uL6 family.</text>
</comment>